<accession>Q8TV07</accession>
<organism>
    <name type="scientific">Methanopyrus kandleri (strain AV19 / DSM 6324 / JCM 9639 / NBRC 100938)</name>
    <dbReference type="NCBI Taxonomy" id="190192"/>
    <lineage>
        <taxon>Archaea</taxon>
        <taxon>Methanobacteriati</taxon>
        <taxon>Methanobacteriota</taxon>
        <taxon>Methanomada group</taxon>
        <taxon>Methanopyri</taxon>
        <taxon>Methanopyrales</taxon>
        <taxon>Methanopyraceae</taxon>
        <taxon>Methanopyrus</taxon>
    </lineage>
</organism>
<keyword id="KW-0378">Hydrolase</keyword>
<keyword id="KW-0460">Magnesium</keyword>
<keyword id="KW-0479">Metal-binding</keyword>
<keyword id="KW-0546">Nucleotide metabolism</keyword>
<keyword id="KW-0547">Nucleotide-binding</keyword>
<keyword id="KW-1185">Reference proteome</keyword>
<name>IXTPA_METKA</name>
<reference key="1">
    <citation type="journal article" date="2002" name="Proc. Natl. Acad. Sci. U.S.A.">
        <title>The complete genome of hyperthermophile Methanopyrus kandleri AV19 and monophyly of archaeal methanogens.</title>
        <authorList>
            <person name="Slesarev A.I."/>
            <person name="Mezhevaya K.V."/>
            <person name="Makarova K.S."/>
            <person name="Polushin N.N."/>
            <person name="Shcherbinina O.V."/>
            <person name="Shakhova V.V."/>
            <person name="Belova G.I."/>
            <person name="Aravind L."/>
            <person name="Natale D.A."/>
            <person name="Rogozin I.B."/>
            <person name="Tatusov R.L."/>
            <person name="Wolf Y.I."/>
            <person name="Stetter K.O."/>
            <person name="Malykh A.G."/>
            <person name="Koonin E.V."/>
            <person name="Kozyavkin S.A."/>
        </authorList>
    </citation>
    <scope>NUCLEOTIDE SEQUENCE [LARGE SCALE GENOMIC DNA]</scope>
    <source>
        <strain>AV19 / DSM 6324 / JCM 9639 / NBRC 100938</strain>
    </source>
</reference>
<proteinExistence type="inferred from homology"/>
<gene>
    <name type="ordered locus">MK1594</name>
</gene>
<dbReference type="EC" id="3.6.1.66" evidence="1"/>
<dbReference type="EMBL" id="AE009439">
    <property type="protein sequence ID" value="AAM02807.1"/>
    <property type="molecule type" value="Genomic_DNA"/>
</dbReference>
<dbReference type="RefSeq" id="WP_011019962.1">
    <property type="nucleotide sequence ID" value="NC_003551.1"/>
</dbReference>
<dbReference type="SMR" id="Q8TV07"/>
<dbReference type="FunCoup" id="Q8TV07">
    <property type="interactions" value="203"/>
</dbReference>
<dbReference type="STRING" id="190192.MK1594"/>
<dbReference type="PaxDb" id="190192-MK1594"/>
<dbReference type="EnsemblBacteria" id="AAM02807">
    <property type="protein sequence ID" value="AAM02807"/>
    <property type="gene ID" value="MK1594"/>
</dbReference>
<dbReference type="GeneID" id="1478189"/>
<dbReference type="KEGG" id="mka:MK1594"/>
<dbReference type="PATRIC" id="fig|190192.8.peg.1755"/>
<dbReference type="HOGENOM" id="CLU_082080_1_0_2"/>
<dbReference type="InParanoid" id="Q8TV07"/>
<dbReference type="OrthoDB" id="372108at2157"/>
<dbReference type="Proteomes" id="UP000001826">
    <property type="component" value="Chromosome"/>
</dbReference>
<dbReference type="GO" id="GO:0005737">
    <property type="term" value="C:cytoplasm"/>
    <property type="evidence" value="ECO:0007669"/>
    <property type="project" value="TreeGrafter"/>
</dbReference>
<dbReference type="GO" id="GO:0035870">
    <property type="term" value="F:dITP diphosphatase activity"/>
    <property type="evidence" value="ECO:0007669"/>
    <property type="project" value="RHEA"/>
</dbReference>
<dbReference type="GO" id="GO:0036220">
    <property type="term" value="F:ITP diphosphatase activity"/>
    <property type="evidence" value="ECO:0007669"/>
    <property type="project" value="UniProtKB-EC"/>
</dbReference>
<dbReference type="GO" id="GO:0046872">
    <property type="term" value="F:metal ion binding"/>
    <property type="evidence" value="ECO:0007669"/>
    <property type="project" value="UniProtKB-KW"/>
</dbReference>
<dbReference type="GO" id="GO:0000166">
    <property type="term" value="F:nucleotide binding"/>
    <property type="evidence" value="ECO:0007669"/>
    <property type="project" value="UniProtKB-KW"/>
</dbReference>
<dbReference type="GO" id="GO:0017111">
    <property type="term" value="F:ribonucleoside triphosphate phosphatase activity"/>
    <property type="evidence" value="ECO:0007669"/>
    <property type="project" value="InterPro"/>
</dbReference>
<dbReference type="GO" id="GO:0036222">
    <property type="term" value="F:XTP diphosphatase activity"/>
    <property type="evidence" value="ECO:0007669"/>
    <property type="project" value="RHEA"/>
</dbReference>
<dbReference type="GO" id="GO:0009117">
    <property type="term" value="P:nucleotide metabolic process"/>
    <property type="evidence" value="ECO:0007669"/>
    <property type="project" value="UniProtKB-KW"/>
</dbReference>
<dbReference type="GO" id="GO:0009146">
    <property type="term" value="P:purine nucleoside triphosphate catabolic process"/>
    <property type="evidence" value="ECO:0007669"/>
    <property type="project" value="UniProtKB-UniRule"/>
</dbReference>
<dbReference type="CDD" id="cd00515">
    <property type="entry name" value="HAM1"/>
    <property type="match status" value="1"/>
</dbReference>
<dbReference type="FunFam" id="3.90.950.10:FF:000001">
    <property type="entry name" value="dITP/XTP pyrophosphatase"/>
    <property type="match status" value="1"/>
</dbReference>
<dbReference type="Gene3D" id="3.90.950.10">
    <property type="match status" value="1"/>
</dbReference>
<dbReference type="HAMAP" id="MF_01405">
    <property type="entry name" value="Non_canon_purine_NTPase"/>
    <property type="match status" value="1"/>
</dbReference>
<dbReference type="InterPro" id="IPR020922">
    <property type="entry name" value="dITP/XTP_pyrophosphatase"/>
</dbReference>
<dbReference type="InterPro" id="IPR029001">
    <property type="entry name" value="ITPase-like_fam"/>
</dbReference>
<dbReference type="InterPro" id="IPR002637">
    <property type="entry name" value="RdgB/HAM1"/>
</dbReference>
<dbReference type="NCBIfam" id="NF011396">
    <property type="entry name" value="PRK14821.1"/>
    <property type="match status" value="1"/>
</dbReference>
<dbReference type="NCBIfam" id="TIGR00042">
    <property type="entry name" value="RdgB/HAM1 family non-canonical purine NTP pyrophosphatase"/>
    <property type="match status" value="1"/>
</dbReference>
<dbReference type="PANTHER" id="PTHR11067:SF9">
    <property type="entry name" value="INOSINE TRIPHOSPHATE PYROPHOSPHATASE"/>
    <property type="match status" value="1"/>
</dbReference>
<dbReference type="PANTHER" id="PTHR11067">
    <property type="entry name" value="INOSINE TRIPHOSPHATE PYROPHOSPHATASE/HAM1 PROTEIN"/>
    <property type="match status" value="1"/>
</dbReference>
<dbReference type="Pfam" id="PF01725">
    <property type="entry name" value="Ham1p_like"/>
    <property type="match status" value="1"/>
</dbReference>
<dbReference type="SUPFAM" id="SSF52972">
    <property type="entry name" value="ITPase-like"/>
    <property type="match status" value="1"/>
</dbReference>
<feature type="chain" id="PRO_0000178275" description="dITP/XTP pyrophosphatase">
    <location>
        <begin position="1"/>
        <end position="188"/>
    </location>
</feature>
<feature type="active site" description="Proton acceptor" evidence="1">
    <location>
        <position position="65"/>
    </location>
</feature>
<feature type="binding site" evidence="1">
    <location>
        <begin position="7"/>
        <end position="12"/>
    </location>
    <ligand>
        <name>substrate</name>
    </ligand>
</feature>
<feature type="binding site" evidence="1">
    <location>
        <position position="36"/>
    </location>
    <ligand>
        <name>Mg(2+)</name>
        <dbReference type="ChEBI" id="CHEBI:18420"/>
    </ligand>
</feature>
<feature type="binding site" evidence="1">
    <location>
        <position position="65"/>
    </location>
    <ligand>
        <name>Mg(2+)</name>
        <dbReference type="ChEBI" id="CHEBI:18420"/>
    </ligand>
</feature>
<feature type="binding site" evidence="1">
    <location>
        <position position="66"/>
    </location>
    <ligand>
        <name>substrate</name>
    </ligand>
</feature>
<feature type="binding site" evidence="1">
    <location>
        <begin position="141"/>
        <end position="144"/>
    </location>
    <ligand>
        <name>substrate</name>
    </ligand>
</feature>
<feature type="binding site" evidence="1">
    <location>
        <position position="164"/>
    </location>
    <ligand>
        <name>substrate</name>
    </ligand>
</feature>
<feature type="binding site" evidence="1">
    <location>
        <begin position="169"/>
        <end position="170"/>
    </location>
    <ligand>
        <name>substrate</name>
    </ligand>
</feature>
<comment type="function">
    <text evidence="1">Pyrophosphatase that catalyzes the hydrolysis of nucleoside triphosphates to their monophosphate derivatives, with a high preference for the non-canonical purine nucleotides XTP (xanthosine triphosphate), dITP (deoxyinosine triphosphate) and ITP. Seems to function as a house-cleaning enzyme that removes non-canonical purine nucleotides from the nucleotide pool, thus preventing their incorporation into DNA/RNA and avoiding chromosomal lesions.</text>
</comment>
<comment type="catalytic activity">
    <reaction evidence="1">
        <text>XTP + H2O = XMP + diphosphate + H(+)</text>
        <dbReference type="Rhea" id="RHEA:28610"/>
        <dbReference type="ChEBI" id="CHEBI:15377"/>
        <dbReference type="ChEBI" id="CHEBI:15378"/>
        <dbReference type="ChEBI" id="CHEBI:33019"/>
        <dbReference type="ChEBI" id="CHEBI:57464"/>
        <dbReference type="ChEBI" id="CHEBI:61314"/>
        <dbReference type="EC" id="3.6.1.66"/>
    </reaction>
</comment>
<comment type="catalytic activity">
    <reaction evidence="1">
        <text>dITP + H2O = dIMP + diphosphate + H(+)</text>
        <dbReference type="Rhea" id="RHEA:28342"/>
        <dbReference type="ChEBI" id="CHEBI:15377"/>
        <dbReference type="ChEBI" id="CHEBI:15378"/>
        <dbReference type="ChEBI" id="CHEBI:33019"/>
        <dbReference type="ChEBI" id="CHEBI:61194"/>
        <dbReference type="ChEBI" id="CHEBI:61382"/>
        <dbReference type="EC" id="3.6.1.66"/>
    </reaction>
</comment>
<comment type="catalytic activity">
    <reaction evidence="1">
        <text>ITP + H2O = IMP + diphosphate + H(+)</text>
        <dbReference type="Rhea" id="RHEA:29399"/>
        <dbReference type="ChEBI" id="CHEBI:15377"/>
        <dbReference type="ChEBI" id="CHEBI:15378"/>
        <dbReference type="ChEBI" id="CHEBI:33019"/>
        <dbReference type="ChEBI" id="CHEBI:58053"/>
        <dbReference type="ChEBI" id="CHEBI:61402"/>
        <dbReference type="EC" id="3.6.1.66"/>
    </reaction>
</comment>
<comment type="cofactor">
    <cofactor evidence="1">
        <name>Mg(2+)</name>
        <dbReference type="ChEBI" id="CHEBI:18420"/>
    </cofactor>
    <text evidence="1">Binds 1 Mg(2+) ion per subunit.</text>
</comment>
<comment type="subunit">
    <text evidence="1">Homodimer.</text>
</comment>
<comment type="similarity">
    <text evidence="1">Belongs to the HAM1 NTPase family.</text>
</comment>
<protein>
    <recommendedName>
        <fullName evidence="1">dITP/XTP pyrophosphatase</fullName>
        <ecNumber evidence="1">3.6.1.66</ecNumber>
    </recommendedName>
    <alternativeName>
        <fullName evidence="1">Non-canonical purine NTP pyrophosphatase</fullName>
    </alternativeName>
    <alternativeName>
        <fullName evidence="1">Non-standard purine NTP pyrophosphatase</fullName>
    </alternativeName>
    <alternativeName>
        <fullName evidence="1">Nucleoside-triphosphate diphosphatase</fullName>
    </alternativeName>
    <alternativeName>
        <fullName evidence="1">Nucleoside-triphosphate pyrophosphatase</fullName>
        <shortName evidence="1">NTPase</shortName>
    </alternativeName>
</protein>
<evidence type="ECO:0000255" key="1">
    <source>
        <dbReference type="HAMAP-Rule" id="MF_01405"/>
    </source>
</evidence>
<sequence>MKVLFATGNIGKYHEAKQILARYGIEVERVDLDYPELQSDSLEEIAAYGARYCAESLGQPVIVEDSGLFIEALNGFPGPYSAYVFDTIGNEGILKLLEGEENRKAEFISVVGYCEPGGRPVTFTGEIRGRIAEEPRGEEGFGYDPIFIPEGEDSTFAELGVEEKCKISHRTKALERFAEWYKNNVAGR</sequence>